<name>CR16_RANXA</name>
<sequence>GLFSVLGAVAKHVLPHVVPVIAEKL</sequence>
<feature type="peptide" id="PRO_0000010180" description="Caerin-1.6">
    <location>
        <begin position="1"/>
        <end position="25"/>
    </location>
</feature>
<feature type="peptide" id="PRO_0000010181" description="Caerin-1.6.1">
    <location>
        <begin position="3"/>
        <end position="25"/>
    </location>
</feature>
<feature type="modified residue" description="Leucine amide" evidence="2 3">
    <location>
        <position position="25"/>
    </location>
</feature>
<evidence type="ECO:0000250" key="1"/>
<evidence type="ECO:0000269" key="2">
    <source>
    </source>
</evidence>
<evidence type="ECO:0000269" key="3">
    <source>
    </source>
</evidence>
<evidence type="ECO:0000305" key="4"/>
<comment type="function">
    <text>Antibacterial peptide, that adopts an alpha helical conformation which can disrupt bacterial membranes. Each caerin displays a different antimicrobial specificity.</text>
</comment>
<comment type="subcellular location">
    <subcellularLocation>
        <location>Secreted</location>
    </subcellularLocation>
</comment>
<comment type="tissue specificity">
    <text>Expressed by the skin dorsal glands.</text>
</comment>
<comment type="domain">
    <text evidence="1">Contains two amphipathic alpha helix regions separated by a region of less-defined helicity and greater flexibility.</text>
</comment>
<comment type="PTM">
    <text>Caerin-1.6.1 does not have any antibacterial activity.</text>
</comment>
<comment type="mass spectrometry">
    <molecule>Caerin-1.6</molecule>
</comment>
<comment type="mass spectrometry">
    <molecule>Caerin-1.6.1</molecule>
</comment>
<comment type="similarity">
    <text evidence="4">Belongs to the frog skin active peptide (FSAP) family. Caerin subfamily.</text>
</comment>
<dbReference type="SMR" id="P62546"/>
<dbReference type="GO" id="GO:0005576">
    <property type="term" value="C:extracellular region"/>
    <property type="evidence" value="ECO:0007669"/>
    <property type="project" value="UniProtKB-SubCell"/>
</dbReference>
<dbReference type="GO" id="GO:0042742">
    <property type="term" value="P:defense response to bacterium"/>
    <property type="evidence" value="ECO:0007669"/>
    <property type="project" value="UniProtKB-KW"/>
</dbReference>
<dbReference type="InterPro" id="IPR010000">
    <property type="entry name" value="Caerin_1"/>
</dbReference>
<dbReference type="Pfam" id="PF07440">
    <property type="entry name" value="Caerin_1"/>
    <property type="match status" value="1"/>
</dbReference>
<proteinExistence type="evidence at protein level"/>
<protein>
    <recommendedName>
        <fullName>Caerin-1.6</fullName>
    </recommendedName>
    <component>
        <recommendedName>
            <fullName>Caerin-1.6.1</fullName>
        </recommendedName>
    </component>
</protein>
<accession>P62546</accession>
<accession>P56231</accession>
<accession>P81249</accession>
<reference key="1">
    <citation type="journal article" date="1997" name="J. Pept. Sci.">
        <title>New caerin antibacterial peptides from the skin glands of the Australian tree frog Litoria xanthomera.</title>
        <authorList>
            <person name="Steinborner S.T."/>
            <person name="Waugh R.J."/>
            <person name="Bowie J.H."/>
            <person name="Wallace J.C."/>
            <person name="Tyler M.J."/>
            <person name="Ramsay S.L."/>
        </authorList>
    </citation>
    <scope>PROTEIN SEQUENCE</scope>
    <scope>AMIDATION AT LEU-25</scope>
    <scope>MASS SPECTROMETRY OF 1.6 AND 1.6.1</scope>
    <source>
        <tissue>Skin secretion</tissue>
    </source>
</reference>
<reference key="2">
    <citation type="journal article" date="1997" name="Rapid Commun. Mass Spectrom.">
        <title>New caerin antibacterial peptides from the skin glands of the Australian tree frog Litoria xanthomera. Part 2. Sequence determination using mass spectrometry and associated techniques.</title>
        <authorList>
            <person name="Steinborner S.T."/>
            <person name="Waugh R.J."/>
            <person name="Bowie J.H."/>
            <person name="Tyler M.J."/>
        </authorList>
    </citation>
    <scope>MASS SPECTROMETRY OF 1.6 AND 1.6.1</scope>
    <scope>AMIDATION AT LEU-25</scope>
    <source>
        <tissue>Skin secretion</tissue>
    </source>
</reference>
<keyword id="KW-0027">Amidation</keyword>
<keyword id="KW-0878">Amphibian defense peptide</keyword>
<keyword id="KW-0044">Antibiotic</keyword>
<keyword id="KW-0929">Antimicrobial</keyword>
<keyword id="KW-0903">Direct protein sequencing</keyword>
<keyword id="KW-0964">Secreted</keyword>
<organism>
    <name type="scientific">Ranoidea xanthomera</name>
    <name type="common">Northern orange-eyed tree frog</name>
    <name type="synonym">Litoria xanthomera</name>
    <dbReference type="NCBI Taxonomy" id="79697"/>
    <lineage>
        <taxon>Eukaryota</taxon>
        <taxon>Metazoa</taxon>
        <taxon>Chordata</taxon>
        <taxon>Craniata</taxon>
        <taxon>Vertebrata</taxon>
        <taxon>Euteleostomi</taxon>
        <taxon>Amphibia</taxon>
        <taxon>Batrachia</taxon>
        <taxon>Anura</taxon>
        <taxon>Neobatrachia</taxon>
        <taxon>Hyloidea</taxon>
        <taxon>Hylidae</taxon>
        <taxon>Pelodryadinae</taxon>
        <taxon>Litoria</taxon>
    </lineage>
</organism>